<sequence>MSMEPRKKRNSILKVRQAVETIEETVMNSGPSSTTTNRRVSFHNVKHVKQYDRDHGKILDATPVKEKITDTIGSDGILTPRGGNMDISESPACTSSFQVFGGGNLDKTMDMSLETTINENNETARLFETTRDPTLLYEKIVETTTKVTERIVSMPLDDTLAMFNTTNQEDKDMSVDRSVLFTIPKVPKHNATMNRTIPMDLDESKAAGGQCDETMNVFNFTNLEAAEMDTSKLDENNTMNAIRIPINSNVMPVDMDITEHHTLIEEKKNDTFGPSQLMDISAPQVQVNDTLAIFNSPRDICNKGLGVPQNLINIASNVVPVDMDITDQAVLNAEKKNDQFETSQLMDISIPKVLVNDTMAMFNSPKHVSKSSMDLEKTIEAADKSTKYPSIADEVEDLDMDMDITEQQPCEAGNQQNDGLQLQKEDLMDISVIRDSPAVNDTMAVFQSPARVKIGANNSIIDSQKSIVFGDEMSIDETQNDGTLTLPKSNVEVTTTNDVYTSLERQEENASENVSMINESSVHSEIDKKSFMLIEEERAFMHSSMIDVAQKLEDDGSSKTPVILASQSASLATKEPSALHNSSATLNNSMELDNNTLLKTMQITTCEDISMVHESIAVELNSNKEQEQFGDETLQKNDTSNTGANFTFQGHNETSQIMNNVDSEAVNTSKISTYSAFNLSINQSISKRRRSLLNSARESPRRVALENSIMSMNGQTMEALTEYRQNKTMQTSQDSMPSMSLNDSGRDILAMNTSVRSPHLNSSKTAAPGTPSLMSQNVQLPPPSPQFEMPDFDPAVVNVVYLTSEDPSTEQHPEALKFQRIVENEKMKVQHEIDSLNSTNQLSAEKIDMLKTKELLKFSHDEREAIMIARKDAEIKFLELRLKFALEKKIESDQEIAELEQGNSKMAEQLRGLDKMAVVQKELEKLRSLPPSREESGKIRKEWMEMKQWEFDQKMKALRNVRSNMIALRSEKNALEMKVAEEHEKFAQRNDLKKSRMLVFSKAVKKIVNF</sequence>
<keyword id="KW-0131">Cell cycle</keyword>
<keyword id="KW-0132">Cell division</keyword>
<keyword id="KW-0137">Centromere</keyword>
<keyword id="KW-0158">Chromosome</keyword>
<keyword id="KW-0159">Chromosome partition</keyword>
<keyword id="KW-0175">Coiled coil</keyword>
<keyword id="KW-0963">Cytoplasm</keyword>
<keyword id="KW-0995">Kinetochore</keyword>
<keyword id="KW-0469">Meiosis</keyword>
<keyword id="KW-0498">Mitosis</keyword>
<keyword id="KW-1185">Reference proteome</keyword>
<keyword id="KW-0677">Repeat</keyword>
<gene>
    <name type="primary">knl-1</name>
    <name type="ORF">C02F5.1</name>
</gene>
<reference key="1">
    <citation type="journal article" date="1994" name="Nature">
        <title>2.2 Mb of contiguous nucleotide sequence from chromosome III of C. elegans.</title>
        <authorList>
            <person name="Wilson R."/>
            <person name="Ainscough R."/>
            <person name="Anderson K."/>
            <person name="Baynes C."/>
            <person name="Berks M."/>
            <person name="Bonfield J."/>
            <person name="Burton J."/>
            <person name="Connell M."/>
            <person name="Copsey T."/>
            <person name="Cooper J."/>
            <person name="Coulson A."/>
            <person name="Craxton M."/>
            <person name="Dear S."/>
            <person name="Du Z."/>
            <person name="Durbin R."/>
            <person name="Favello A."/>
            <person name="Fraser A."/>
            <person name="Fulton L."/>
            <person name="Gardner A."/>
            <person name="Green P."/>
            <person name="Hawkins T."/>
            <person name="Hillier L."/>
            <person name="Jier M."/>
            <person name="Johnston L."/>
            <person name="Jones M."/>
            <person name="Kershaw J."/>
            <person name="Kirsten J."/>
            <person name="Laisster N."/>
            <person name="Latreille P."/>
            <person name="Lightning J."/>
            <person name="Lloyd C."/>
            <person name="Mortimore B."/>
            <person name="O'Callaghan M."/>
            <person name="Parsons J."/>
            <person name="Percy C."/>
            <person name="Rifken L."/>
            <person name="Roopra A."/>
            <person name="Saunders D."/>
            <person name="Shownkeen R."/>
            <person name="Sims M."/>
            <person name="Smaldon N."/>
            <person name="Smith A."/>
            <person name="Smith M."/>
            <person name="Sonnhammer E."/>
            <person name="Staden R."/>
            <person name="Sulston J."/>
            <person name="Thierry-Mieg J."/>
            <person name="Thomas K."/>
            <person name="Vaudin M."/>
            <person name="Vaughan K."/>
            <person name="Waterston R."/>
            <person name="Watson A."/>
            <person name="Weinstock L."/>
            <person name="Wilkinson-Sproat J."/>
            <person name="Wohldman P."/>
        </authorList>
    </citation>
    <scope>NUCLEOTIDE SEQUENCE [LARGE SCALE GENOMIC DNA]</scope>
    <source>
        <strain>Bristol N2</strain>
    </source>
</reference>
<reference key="2">
    <citation type="journal article" date="1998" name="Science">
        <title>Genome sequence of the nematode C. elegans: a platform for investigating biology.</title>
        <authorList>
            <consortium name="The C. elegans sequencing consortium"/>
        </authorList>
    </citation>
    <scope>NUCLEOTIDE SEQUENCE [LARGE SCALE GENOMIC DNA]</scope>
    <source>
        <strain>Bristol N2</strain>
    </source>
</reference>
<reference key="3">
    <citation type="journal article" date="2003" name="Genes Dev.">
        <title>KNL-1 directs assembly of the microtubule-binding interface of the kinetochore in C. elegans.</title>
        <authorList>
            <person name="Desai A."/>
            <person name="Rybina S."/>
            <person name="Mueller-Reichert T."/>
            <person name="Shevchenko A."/>
            <person name="Shevchenko A."/>
            <person name="Hyman A."/>
            <person name="Oegema K."/>
        </authorList>
    </citation>
    <scope>FUNCTION</scope>
    <scope>COMPLEX WITH HCP-3 AND HCP-4</scope>
    <scope>SUBCELLULAR LOCATION</scope>
    <scope>DEVELOPMENTAL STAGE</scope>
    <scope>DISRUPTION PHENOTYPE</scope>
</reference>
<reference key="4">
    <citation type="journal article" date="2004" name="Genes Dev.">
        <title>A conserved protein network controls assembly of the outer kinetochore and its ability to sustain tension.</title>
        <authorList>
            <person name="Cheeseman I.M."/>
            <person name="Niessen S."/>
            <person name="Anderson S."/>
            <person name="Hyndman F."/>
            <person name="Yates J.R. III"/>
            <person name="Oegema K."/>
            <person name="Desai A."/>
        </authorList>
    </citation>
    <scope>FUNCTION</scope>
    <scope>INTERACTION WITH HCP-4; HIM-10; KBP-1; KBP-2; KBP-3; KBP-4; KBP-5; KNL-3; MIS-12 AND NDC-80</scope>
    <scope>SUBCELLULAR LOCATION</scope>
</reference>
<reference key="5">
    <citation type="journal article" date="2005" name="Mol. Cell. Biol.">
        <title>HCP-4/CENP-C promotes the prophase timing of centromere resolution by enabling the centromere association of HCP-6 in Caenorhabditis elegans.</title>
        <authorList>
            <person name="Moore L.L."/>
            <person name="Stanvitch G."/>
            <person name="Roth M.B."/>
            <person name="Rosen D."/>
        </authorList>
    </citation>
    <scope>FUNCTION</scope>
    <scope>DISRUPTION PHENOTYPE</scope>
</reference>
<reference key="6">
    <citation type="journal article" date="2005" name="Nat. Cell Biol.">
        <title>Differential role of CENP-A in the segregation of holocentric C. elegans chromosomes during meiosis and mitosis.</title>
        <authorList>
            <person name="Monen J."/>
            <person name="Maddox P.S."/>
            <person name="Hyndman F."/>
            <person name="Oegema K."/>
            <person name="Desai A."/>
        </authorList>
    </citation>
    <scope>FUNCTION</scope>
    <scope>SUBCELLULAR LOCATION</scope>
</reference>
<reference key="7">
    <citation type="journal article" date="2006" name="Cell">
        <title>The conserved KMN network constitutes the core microtubule-binding site of the kinetochore.</title>
        <authorList>
            <person name="Cheeseman I.M."/>
            <person name="Chappie J.S."/>
            <person name="Wilson-Kubalek E.M."/>
            <person name="Desai A."/>
        </authorList>
    </citation>
    <scope>FUNCTION</scope>
    <scope>INTERACTION WITH MIS12 COMPLEX</scope>
</reference>
<reference key="8">
    <citation type="journal article" date="2007" name="J. Cell Biol.">
        <title>Functional genomics identifies a Myb domain-containing protein family required for assembly of CENP-A chromatin.</title>
        <authorList>
            <person name="Maddox P.S."/>
            <person name="Hyndman F."/>
            <person name="Monen J."/>
            <person name="Oegema K."/>
            <person name="Desai A."/>
        </authorList>
    </citation>
    <scope>SUBCELLULAR LOCATION</scope>
</reference>
<reference key="9">
    <citation type="journal article" date="2007" name="J. Cell Biol.">
        <title>RMD-1, a novel microtubule-associated protein, functions in chromosome segregation in Caenorhabditis elegans.</title>
        <authorList>
            <person name="Oishi K."/>
            <person name="Okano H."/>
            <person name="Sawa H."/>
        </authorList>
    </citation>
    <scope>FUNCTION</scope>
    <scope>DISRUPTION PHENOTYPE</scope>
</reference>
<reference key="10">
    <citation type="journal article" date="2008" name="Genes Dev.">
        <title>A new mechanism controlling kinetochore-microtubule interactions revealed by comparison of two dynein-targeting components: SPDL-1 and the Rod/Zwilch/Zw10 complex.</title>
        <authorList>
            <person name="Gassmann R."/>
            <person name="Essex A."/>
            <person name="Hu J.-S."/>
            <person name="Maddox P.S."/>
            <person name="Motegi F."/>
            <person name="Sugimoto A."/>
            <person name="O'Rourke S.M."/>
            <person name="Bowerman B."/>
            <person name="McLeod I."/>
            <person name="Yates J.R. III"/>
            <person name="Oegema K."/>
            <person name="Cheeseman I.M."/>
            <person name="Desai A."/>
        </authorList>
    </citation>
    <scope>FUNCTION</scope>
    <scope>SUBCELLULAR LOCATION</scope>
    <scope>DISRUPTION PHENOTYPE</scope>
</reference>
<reference key="11">
    <citation type="journal article" date="2008" name="J. Cell Biol.">
        <title>SPDL-1 functions as a kinetochore receptor for MDF-1 in Caenorhabditis elegans.</title>
        <authorList>
            <person name="Yamamoto T.G."/>
            <person name="Watanabe S."/>
            <person name="Essex A."/>
            <person name="Kitagawa R."/>
        </authorList>
    </citation>
    <scope>FUNCTION</scope>
    <scope>DISRUPTION PHENOTYPE</scope>
</reference>
<reference key="12">
    <citation type="journal article" date="2009" name="Mol. Biol. Cell">
        <title>Systematic analysis in Caenorhabditis elegans reveals that the spindle checkpoint is composed of two largely independent branches.</title>
        <authorList>
            <person name="Essex A."/>
            <person name="Dammermann A."/>
            <person name="Lewellyn L."/>
            <person name="Oegema K."/>
            <person name="Desai A."/>
        </authorList>
    </citation>
    <scope>FUNCTION</scope>
</reference>
<reference key="13">
    <citation type="journal article" date="2010" name="Nat. Cell Biol.">
        <title>A kinetochore-independent mechanism drives anaphase chromosome separation during acentrosomal meiosis.</title>
        <authorList>
            <person name="Dumont J."/>
            <person name="Oegema K."/>
            <person name="Desai A."/>
        </authorList>
    </citation>
    <scope>FUNCTION</scope>
    <scope>SUBCELLULAR LOCATION</scope>
</reference>
<reference key="14">
    <citation type="journal article" date="2012" name="J. Cell Biol.">
        <title>Microtubule binding by KNL-1 contributes to spindle checkpoint silencing at the kinetochore.</title>
        <authorList>
            <person name="Espeut J."/>
            <person name="Cheerambathur D.K."/>
            <person name="Krenning L."/>
            <person name="Oegema K."/>
            <person name="Desai A."/>
        </authorList>
    </citation>
    <scope>FUNCTION</scope>
    <scope>INTERACTION WITH GSP-1 AND GSP-2</scope>
    <scope>SUBCELLULAR LOCATION</scope>
    <scope>DISRUPTION PHENOTYPE</scope>
    <scope>MUTAGENESIS OF 6-ARG--ARG-9; 6-ARG--LYS-14 AND 40-VAL--PHE-42</scope>
</reference>
<reference key="15">
    <citation type="journal article" date="2014" name="J. Cell Biol.">
        <title>A Bub1-Mad1 interaction targets the Mad1-Mad2 complex to unattached kinetochores to initiate the spindle checkpoint.</title>
        <authorList>
            <person name="Moyle M.W."/>
            <person name="Kim T."/>
            <person name="Hattersley N."/>
            <person name="Espeut J."/>
            <person name="Cheerambathur D.K."/>
            <person name="Oegema K."/>
            <person name="Desai A."/>
        </authorList>
    </citation>
    <scope>FUNCTION</scope>
    <scope>SUBCELLULAR LOCATION</scope>
    <scope>DOMAIN</scope>
    <scope>REPEATS</scope>
</reference>
<organism>
    <name type="scientific">Caenorhabditis elegans</name>
    <dbReference type="NCBI Taxonomy" id="6239"/>
    <lineage>
        <taxon>Eukaryota</taxon>
        <taxon>Metazoa</taxon>
        <taxon>Ecdysozoa</taxon>
        <taxon>Nematoda</taxon>
        <taxon>Chromadorea</taxon>
        <taxon>Rhabditida</taxon>
        <taxon>Rhabditina</taxon>
        <taxon>Rhabditomorpha</taxon>
        <taxon>Rhabditoidea</taxon>
        <taxon>Rhabditidae</taxon>
        <taxon>Peloderinae</taxon>
        <taxon>Caenorhabditis</taxon>
    </lineage>
</organism>
<feature type="chain" id="PRO_0000065107" description="Outer kinetochore KNL1 complex subunit knl-1">
    <location>
        <begin position="1"/>
        <end position="1010"/>
    </location>
</feature>
<feature type="repeat" description="1" evidence="15">
    <location>
        <begin position="85"/>
        <end position="88"/>
    </location>
</feature>
<feature type="repeat" description="2" evidence="15">
    <location>
        <begin position="109"/>
        <end position="112"/>
    </location>
</feature>
<feature type="repeat" description="3" evidence="15">
    <location>
        <begin position="228"/>
        <end position="231"/>
    </location>
</feature>
<feature type="repeat" description="4" evidence="15">
    <location>
        <begin position="255"/>
        <end position="258"/>
    </location>
</feature>
<feature type="repeat" description="5" evidence="15">
    <location>
        <begin position="278"/>
        <end position="281"/>
    </location>
</feature>
<feature type="repeat" description="6" evidence="15">
    <location>
        <begin position="323"/>
        <end position="326"/>
    </location>
</feature>
<feature type="repeat" description="7" evidence="15">
    <location>
        <begin position="346"/>
        <end position="349"/>
    </location>
</feature>
<feature type="repeat" description="8" evidence="15">
    <location>
        <begin position="402"/>
        <end position="405"/>
    </location>
</feature>
<feature type="repeat" description="9" evidence="15">
    <location>
        <begin position="428"/>
        <end position="431"/>
    </location>
</feature>
<feature type="region of interest" description="9 X 4 AA repeats of M-[D/E]-[I/L/M]-[S/T]" evidence="15">
    <location>
        <begin position="85"/>
        <end position="431"/>
    </location>
</feature>
<feature type="coiled-coil region" evidence="1">
    <location>
        <begin position="820"/>
        <end position="915"/>
    </location>
</feature>
<feature type="coiled-coil region" evidence="1">
    <location>
        <begin position="956"/>
        <end position="988"/>
    </location>
</feature>
<feature type="mutagenesis site" description="Abrogates microtubule binding and bundling activity and impairs silencing of the spindle assembly checkpoint." evidence="13">
    <location>
        <begin position="6"/>
        <end position="14"/>
    </location>
</feature>
<feature type="mutagenesis site" description="Abrogates microtubule binding and bundling activity and impairs silencing of the spindle assembly checkpoint." evidence="13">
    <original>RKKR</original>
    <variation>AAAA</variation>
    <location>
        <begin position="6"/>
        <end position="9"/>
    </location>
</feature>
<feature type="mutagenesis site" description="Abolishes binding to the protein phosphatase 1 (PP1) catalytic subunits gsp-1 and gsp-2 and delays the formation of load-bearing kinetochore-microtubule attachments and impairs silencing of the spindle assembly checkpoint." evidence="13">
    <original>VSF</original>
    <variation>ASA</variation>
    <location>
        <begin position="40"/>
        <end position="42"/>
    </location>
</feature>
<comment type="function">
    <text evidence="2 3 4 5 6 8 9 10 11 12 13 14">Acts as a component of the outer kinetochore KNL1 complex that serves as a docking point for spindle assembly checkpoint components and mediates microtubule-kinetochore interactions (PubMed:14522947, PubMed:17129783, PubMed:22331849). Kinetochores, consisting of a centromere-associated inner segment and a microtubule-contacting outer segment, play a crucial role in chromosome segregation by mediating the physical connection between centromeric DNA and spindle microtubules (PubMed:14522947, PubMed:15371340, PubMed:15767665, PubMed:16273096, PubMed:17129783, PubMed:18070910, PubMed:22331849). The outer kinetochore is made up of the ten-subunit KMN network, comprising the MIS12, NDC80 and KNL1 complexes, and auxiliary microtubule-associated components; together they connect the outer kinetochore with the inner kinetochore, bind microtubules, and mediate interactions with mitotic checkpoint proteins that delay anaphase until chromosomes are bioriented on the spindle (PubMed:14522947, PubMed:15371340, PubMed:17129783). Binds the protein phosphatase 1 catalytic subunits gsp-1 and gsp-2, which has a role in delaying formation of load-bearing kinetochore-microtubule attachments (PubMed:22331849). Required for the recruitment of spindle-assembly checkpoint components bub-1 and mdf-1/2 to unattached kinetochores (PubMed:19109417, PubMed:20729837, PubMed:24567362). Binds microtubules which plays a role in silencing of the spindle assembly checkpoint, but not the formation of load-bearing microtubule-kinetochore attachments (PubMed:22331849). Has a role in the correct localization of the spindly-like protein spdl-1 and the RZZ complex that is composed of rod-1, czw-1 and zwl-1 to kinetochores (PubMed:18765790, PubMed:18936247).</text>
</comment>
<comment type="subunit">
    <text evidence="2 3 6 13 16">Component of the KNL1 complex composed of knl-1 and kbp-5 (Probable). Part of the ten-subunit outer kinetochore KMN network that includes the KNL1, MIS12 and NDC80 complexes (PubMed:14522947, PubMed:15371340, PubMed:17129783). Interacts with the protein phosphatase 1 (PP1) catalytic subunit gsp-1; the interaction is direct (PubMed:22331849). Interacts with the protein phosphatase 1 (PP1) catalytic subunit gsp-2; the interaction is direct (PubMed:22331849). Interacts with the MIS12 complex subunits kbp-1, kbp-2 and mis-12 (PubMed:17129783). Interacts with the NDC80 complex components ndc-80 and him-10 (PubMed:15371340). Interacts with knl-3 (PubMed:15371340). Interacts with kbp-3 (PubMed:15371340). Interacts with kbp-4 (PubMed:15371340). Interacts with kbp-5 (PubMed:15371340).</text>
</comment>
<comment type="subcellular location">
    <subcellularLocation>
        <location evidence="12">Cytoplasm</location>
        <location evidence="12">Cell cortex</location>
    </subcellularLocation>
    <subcellularLocation>
        <location evidence="2 3 5 7 9 13 14">Chromosome</location>
        <location evidence="2 3 5 7 9 13 14">Centromere</location>
        <location evidence="2 3 5 7 9 13 14">Kinetochore</location>
    </subcellularLocation>
    <text evidence="2 3 5 7 12">Also found on the surface of chromosomes (PubMed:14522947). Subcellular localization dependent on expression of hcp-3, hcp-4, knl-3 and knl-2 (PubMed:14522947, PubMed:15371340, PubMed:16273096, PubMed:17339379). During anaphase of meiosis I, localized also to spindle-associated rod-shaped structures which depends on zwl-1 (PubMed:20729837).</text>
</comment>
<comment type="developmental stage">
    <text evidence="2">Expressed on chromosomes from early prophase until late anaphase.</text>
</comment>
<comment type="domain">
    <text evidence="14">The N-terminus contains a number of repeats which contribute additively to bub-1 recruitment to unattached kinetochores. The repeats are not required for localization to kinetochores.</text>
</comment>
<comment type="disruption phenotype">
    <text evidence="2 4 8 9 10">Perturbed spindle-kinetochore interactions, segregation defects and premature spindle elongation (PubMed:14522947, PubMed:15767665, PubMed:18070910). RNAi-mediated knockdown results in reduced localization of the spindly-like protein spdl-1 and the RZZ complex component zwl-1 to kinetochores (PubMed:18765790, PubMed:18936247). RNAi-mediated knockdown leads to embryonic lethality (PubMed:22331849). Does not affect spdl-1 localization to microtubules (PubMed:18936247).</text>
</comment>
<accession>P34278</accession>
<evidence type="ECO:0000255" key="1"/>
<evidence type="ECO:0000269" key="2">
    <source>
    </source>
</evidence>
<evidence type="ECO:0000269" key="3">
    <source>
    </source>
</evidence>
<evidence type="ECO:0000269" key="4">
    <source>
    </source>
</evidence>
<evidence type="ECO:0000269" key="5">
    <source>
    </source>
</evidence>
<evidence type="ECO:0000269" key="6">
    <source>
    </source>
</evidence>
<evidence type="ECO:0000269" key="7">
    <source>
    </source>
</evidence>
<evidence type="ECO:0000269" key="8">
    <source>
    </source>
</evidence>
<evidence type="ECO:0000269" key="9">
    <source>
    </source>
</evidence>
<evidence type="ECO:0000269" key="10">
    <source>
    </source>
</evidence>
<evidence type="ECO:0000269" key="11">
    <source>
    </source>
</evidence>
<evidence type="ECO:0000269" key="12">
    <source>
    </source>
</evidence>
<evidence type="ECO:0000269" key="13">
    <source>
    </source>
</evidence>
<evidence type="ECO:0000269" key="14">
    <source>
    </source>
</evidence>
<evidence type="ECO:0000305" key="15"/>
<evidence type="ECO:0000305" key="16">
    <source>
    </source>
</evidence>
<name>KNL1_CAEEL</name>
<proteinExistence type="evidence at protein level"/>
<dbReference type="EMBL" id="FO080288">
    <property type="protein sequence ID" value="CCD62626.1"/>
    <property type="molecule type" value="Genomic_DNA"/>
</dbReference>
<dbReference type="RefSeq" id="NP_498811.1">
    <property type="nucleotide sequence ID" value="NM_066410.6"/>
</dbReference>
<dbReference type="SMR" id="P34278"/>
<dbReference type="BioGRID" id="41368">
    <property type="interactions" value="28"/>
</dbReference>
<dbReference type="ComplexPortal" id="CPX-808">
    <property type="entry name" value="Knl-1/Mis12/MIND complex"/>
</dbReference>
<dbReference type="ComplexPortal" id="CPX-812">
    <property type="entry name" value="Knl1-Zwint1 complex"/>
</dbReference>
<dbReference type="DIP" id="DIP-25115N"/>
<dbReference type="FunCoup" id="P34278">
    <property type="interactions" value="161"/>
</dbReference>
<dbReference type="IntAct" id="P34278">
    <property type="interactions" value="18"/>
</dbReference>
<dbReference type="STRING" id="6239.C02F5.1.1"/>
<dbReference type="PaxDb" id="6239-C02F5.1"/>
<dbReference type="PeptideAtlas" id="P34278"/>
<dbReference type="EnsemblMetazoa" id="C02F5.1.1">
    <property type="protein sequence ID" value="C02F5.1.1"/>
    <property type="gene ID" value="WBGene00002231"/>
</dbReference>
<dbReference type="GeneID" id="176164"/>
<dbReference type="KEGG" id="cel:CELE_C02F5.1"/>
<dbReference type="AGR" id="WB:WBGene00002231"/>
<dbReference type="CTD" id="176164"/>
<dbReference type="WormBase" id="C02F5.1">
    <property type="protein sequence ID" value="CE02450"/>
    <property type="gene ID" value="WBGene00002231"/>
    <property type="gene designation" value="knl-1"/>
</dbReference>
<dbReference type="eggNOG" id="ENOG502TGNI">
    <property type="taxonomic scope" value="Eukaryota"/>
</dbReference>
<dbReference type="HOGENOM" id="CLU_296876_0_0_1"/>
<dbReference type="InParanoid" id="P34278"/>
<dbReference type="OMA" id="KINENCH"/>
<dbReference type="OrthoDB" id="5834495at2759"/>
<dbReference type="PhylomeDB" id="P34278"/>
<dbReference type="PRO" id="PR:P34278"/>
<dbReference type="Proteomes" id="UP000001940">
    <property type="component" value="Chromosome III"/>
</dbReference>
<dbReference type="Bgee" id="WBGene00002231">
    <property type="expression patterns" value="Expressed in germ line (C elegans) and 4 other cell types or tissues"/>
</dbReference>
<dbReference type="GO" id="GO:0005938">
    <property type="term" value="C:cell cortex"/>
    <property type="evidence" value="ECO:0007669"/>
    <property type="project" value="UniProtKB-SubCell"/>
</dbReference>
<dbReference type="GO" id="GO:0000785">
    <property type="term" value="C:chromatin"/>
    <property type="evidence" value="ECO:0000314"/>
    <property type="project" value="UniProtKB"/>
</dbReference>
<dbReference type="GO" id="GO:0005694">
    <property type="term" value="C:chromosome"/>
    <property type="evidence" value="ECO:0000314"/>
    <property type="project" value="UniProtKB"/>
</dbReference>
<dbReference type="GO" id="GO:0000776">
    <property type="term" value="C:kinetochore"/>
    <property type="evidence" value="ECO:0000314"/>
    <property type="project" value="UniProtKB"/>
</dbReference>
<dbReference type="GO" id="GO:0000940">
    <property type="term" value="C:outer kinetochore"/>
    <property type="evidence" value="ECO:0000314"/>
    <property type="project" value="UniProtKB"/>
</dbReference>
<dbReference type="GO" id="GO:0008017">
    <property type="term" value="F:microtubule binding"/>
    <property type="evidence" value="ECO:0000314"/>
    <property type="project" value="UniProtKB"/>
</dbReference>
<dbReference type="GO" id="GO:0044877">
    <property type="term" value="F:protein-containing complex binding"/>
    <property type="evidence" value="ECO:0000353"/>
    <property type="project" value="UniProtKB"/>
</dbReference>
<dbReference type="GO" id="GO:0030953">
    <property type="term" value="P:astral microtubule organization"/>
    <property type="evidence" value="ECO:0000315"/>
    <property type="project" value="UniProtKB"/>
</dbReference>
<dbReference type="GO" id="GO:0051315">
    <property type="term" value="P:attachment of mitotic spindle microtubules to kinetochore"/>
    <property type="evidence" value="ECO:0000314"/>
    <property type="project" value="UniProtKB"/>
</dbReference>
<dbReference type="GO" id="GO:0008608">
    <property type="term" value="P:attachment of spindle microtubules to kinetochore"/>
    <property type="evidence" value="ECO:0000314"/>
    <property type="project" value="ComplexPortal"/>
</dbReference>
<dbReference type="GO" id="GO:0051301">
    <property type="term" value="P:cell division"/>
    <property type="evidence" value="ECO:0000315"/>
    <property type="project" value="UniProtKB"/>
</dbReference>
<dbReference type="GO" id="GO:0007059">
    <property type="term" value="P:chromosome segregation"/>
    <property type="evidence" value="ECO:0000315"/>
    <property type="project" value="UniProtKB"/>
</dbReference>
<dbReference type="GO" id="GO:0045184">
    <property type="term" value="P:establishment of protein localization"/>
    <property type="evidence" value="ECO:0000314"/>
    <property type="project" value="UniProtKB"/>
</dbReference>
<dbReference type="GO" id="GO:0051382">
    <property type="term" value="P:kinetochore assembly"/>
    <property type="evidence" value="ECO:0000314"/>
    <property type="project" value="UniProtKB"/>
</dbReference>
<dbReference type="GO" id="GO:0051307">
    <property type="term" value="P:meiotic chromosome separation"/>
    <property type="evidence" value="ECO:0000315"/>
    <property type="project" value="UniProtKB"/>
</dbReference>
<dbReference type="GO" id="GO:0043060">
    <property type="term" value="P:meiotic metaphase I homologous chromosome alignment"/>
    <property type="evidence" value="ECO:0000315"/>
    <property type="project" value="UniProtKB"/>
</dbReference>
<dbReference type="GO" id="GO:0000212">
    <property type="term" value="P:meiotic spindle organization"/>
    <property type="evidence" value="ECO:0000315"/>
    <property type="project" value="UniProtKB"/>
</dbReference>
<dbReference type="GO" id="GO:0007094">
    <property type="term" value="P:mitotic spindle assembly checkpoint signaling"/>
    <property type="evidence" value="ECO:0000315"/>
    <property type="project" value="WormBase"/>
</dbReference>
<dbReference type="GO" id="GO:0140499">
    <property type="term" value="P:negative regulation of mitotic spindle assembly checkpoint signaling"/>
    <property type="evidence" value="ECO:0000315"/>
    <property type="project" value="UniProtKB"/>
</dbReference>
<dbReference type="GO" id="GO:1905342">
    <property type="term" value="P:positive regulation of protein localization to kinetochore"/>
    <property type="evidence" value="ECO:0000315"/>
    <property type="project" value="UniProtKB"/>
</dbReference>
<dbReference type="GO" id="GO:0034501">
    <property type="term" value="P:protein localization to kinetochore"/>
    <property type="evidence" value="ECO:0000315"/>
    <property type="project" value="UniProtKB"/>
</dbReference>
<dbReference type="GO" id="GO:1903394">
    <property type="term" value="P:protein localization to kinetochore involved in kinetochore assembly"/>
    <property type="evidence" value="ECO:0000315"/>
    <property type="project" value="UniProtKB"/>
</dbReference>
<dbReference type="GO" id="GO:0051988">
    <property type="term" value="P:regulation of attachment of spindle microtubules to kinetochore"/>
    <property type="evidence" value="ECO:0000314"/>
    <property type="project" value="ComplexPortal"/>
</dbReference>
<protein>
    <recommendedName>
        <fullName evidence="15">Outer kinetochore KNL1 complex subunit knl-1</fullName>
    </recommendedName>
    <alternativeName>
        <fullName>Kinetochore null protein 1</fullName>
    </alternativeName>
</protein>